<sequence>MDYFLFIALTFLLTFHVHNAQGSELPTTTTESTETSSSKIYIIHVTGPEGKMLTESEDLESWYHSFLPPTLMSSEEQPRVIYSYKNVLRGFAASLTQEELSAVEKKNGFISAHPQRVLHRQTTHTPKFLGLQQDTGVWKESNFGKGVIIGVLDSGITPGHPSFSDVGIPPPPPKWKGRCDLNVTACNNKLIGARAFNLAAEAMNGKKAEAPIDEDGHGTHTASTAAGAFVNYAEVLGNAKGTAAGMAPHAHLAIYKVCFGEDCPESDILAALDAAVEDGVDVISISLGLSEPPPFFNDSTAIGAFAAMQKGIFVSCAAGNSGPFNSSIVNAAPWILTVGASTIDRRIVATAKLGNGQEFDGESVFQPSSFTPTLLPLAYAGKNGKEESAFCANGSLDDSAFRGKVVLCERGGGIARIAKGEEVKRAGGAAMILMNDETNAFSLSADVHALPATHVSYAAGIEIKAYINSTATPTATILFKGTVIGNSLAPAVASFSSRGPNLPSPGILKPDIIGPGVNILAAWPFPLSNSTDSKLTFNIESGTSMSCPHLSGIAALLKSSHPHWSPAAIKSAIMTSADTINLGNKLIVDETLQPTDLFATGSGHVNPSRANDPGLVYDIQPDDYIPYLCGLGYSETEVGIIAHRKIKCSASIPEGELNYPSFSVELGSSKTFTRTVTNVGEAHSSYDLIVAAPQGVDVKVQPYKLNFSEVNQKETYSVTFSRTGLGNKTQEYAQGFLKWVSTKHTVRSPISVKFI</sequence>
<accession>A9QY38</accession>
<comment type="function">
    <text evidence="1">Required for arbuscular mycorrhiza (AM) development during AM symbiosis with AM fungi (e.g. Glomeromycota intraradices).</text>
</comment>
<comment type="subcellular location">
    <subcellularLocation>
        <location evidence="1">Secreted</location>
        <location evidence="1">Extracellular space</location>
        <location evidence="1">Apoplast</location>
    </subcellularLocation>
    <text evidence="1">Accumulates in the intercellular spaces and the periarbuscular space (PAS) during arbuscular mycorrhizal (AM) symbiosis.</text>
</comment>
<comment type="developmental stage">
    <text evidence="6">Accumulates in root cells that are adjacent to intra-radical fungal hyphae or in cells that harbor them during arbuscular mycorrhizal (AM) symbiosis, especially in epidermal and cortical cells (PubMed:19220794). During symbiosis with Rhizobia bacteria (e.g. Mesorhizobium loti), induced in nodules (PubMed:19220794).</text>
</comment>
<comment type="induction">
    <text evidence="6">Rapidly induced in roots during development of arbuscular mycorrhiza (AM) upon colonization by AM fungus (e.g. Glomeromycota intraradices) (PubMed:19220794). Also observed in root nodules that arise from symbiotic associations with nitrogen-fixing Rhizobia bacteria (e.g. Mesorhizobium loti) (PubMed:19220794).</text>
</comment>
<comment type="similarity">
    <text evidence="4">Belongs to the peptidase S8 family.</text>
</comment>
<reference key="1">
    <citation type="journal article" date="2008" name="DNA Res.">
        <title>Genome structure of the legume, Lotus japonicus.</title>
        <authorList>
            <person name="Sato S."/>
            <person name="Nakamura Y."/>
            <person name="Kaneko T."/>
            <person name="Asamizu E."/>
            <person name="Kato T."/>
            <person name="Nakao M."/>
            <person name="Sasamoto S."/>
            <person name="Watanabe A."/>
            <person name="Ono A."/>
            <person name="Kawashima K."/>
            <person name="Fujishiro T."/>
            <person name="Katoh M."/>
            <person name="Kohara M."/>
            <person name="Kishida Y."/>
            <person name="Minami C."/>
            <person name="Nakayama S."/>
            <person name="Nakazaki N."/>
            <person name="Shimizu Y."/>
            <person name="Shinpo S."/>
            <person name="Takahashi C."/>
            <person name="Wada T."/>
            <person name="Yamada M."/>
            <person name="Ohmido N."/>
            <person name="Hayashi M."/>
            <person name="Fukui K."/>
            <person name="Baba T."/>
            <person name="Nakamichi T."/>
            <person name="Mori H."/>
            <person name="Tabata S."/>
        </authorList>
    </citation>
    <scope>NUCLEOTIDE SEQUENCE [GENOMIC DNA]</scope>
    <source>
        <strain>cv. Miyakojima MG-20</strain>
    </source>
</reference>
<reference key="2">
    <citation type="journal article" date="2009" name="Plant J.">
        <title>Apoplastic plant subtilases support arbuscular mycorrhiza development in Lotus japonicus.</title>
        <authorList>
            <person name="Takeda N."/>
            <person name="Sato S."/>
            <person name="Asamizu E."/>
            <person name="Tabata S."/>
            <person name="Parniske M."/>
        </authorList>
    </citation>
    <scope>INDUCTION BY GLOMEROMYCOTA INTRARADICES AND MESORHIZOBIUM LOTI</scope>
    <scope>DEVELOPMENTAL STAGE</scope>
    <source>
        <strain>cv. Gifu / B-129</strain>
        <strain>cv. Miyakojima MG-20</strain>
    </source>
</reference>
<feature type="signal peptide" evidence="2">
    <location>
        <begin position="1"/>
        <end position="20"/>
    </location>
</feature>
<feature type="chain" id="PRO_5002742806" description="Subtilisin-like protease 4">
    <location>
        <begin position="21"/>
        <end position="755"/>
    </location>
</feature>
<feature type="domain" description="Inhibitor I9" evidence="2">
    <location>
        <begin position="41"/>
        <end position="119"/>
    </location>
</feature>
<feature type="domain" description="Peptidase S8" evidence="4">
    <location>
        <begin position="128"/>
        <end position="611"/>
    </location>
</feature>
<feature type="domain" description="PA" evidence="2">
    <location>
        <begin position="376"/>
        <end position="461"/>
    </location>
</feature>
<feature type="active site" description="Charge relay system" evidence="4">
    <location>
        <position position="153"/>
    </location>
</feature>
<feature type="active site" description="Charge relay system" evidence="4">
    <location>
        <position position="217"/>
    </location>
</feature>
<feature type="active site" description="Charge relay system" evidence="4">
    <location>
        <position position="544"/>
    </location>
</feature>
<feature type="glycosylation site" description="N-linked (GlcNAc...) asparagine" evidence="3">
    <location>
        <position position="182"/>
    </location>
</feature>
<feature type="glycosylation site" description="N-linked (GlcNAc...) asparagine" evidence="3">
    <location>
        <position position="297"/>
    </location>
</feature>
<feature type="glycosylation site" description="N-linked (GlcNAc...) asparagine" evidence="3">
    <location>
        <position position="325"/>
    </location>
</feature>
<feature type="glycosylation site" description="N-linked (GlcNAc...) asparagine" evidence="3">
    <location>
        <position position="393"/>
    </location>
</feature>
<feature type="glycosylation site" description="N-linked (GlcNAc...) asparagine" evidence="3">
    <location>
        <position position="468"/>
    </location>
</feature>
<feature type="glycosylation site" description="N-linked (GlcNAc...) asparagine" evidence="3">
    <location>
        <position position="529"/>
    </location>
</feature>
<feature type="glycosylation site" description="N-linked (GlcNAc...) asparagine" evidence="3">
    <location>
        <position position="706"/>
    </location>
</feature>
<feature type="glycosylation site" description="N-linked (GlcNAc...) asparagine" evidence="3">
    <location>
        <position position="727"/>
    </location>
</feature>
<dbReference type="EC" id="3.4.21.-" evidence="5"/>
<dbReference type="EMBL" id="AP009542">
    <property type="protein sequence ID" value="BAF95753.1"/>
    <property type="molecule type" value="Genomic_DNA"/>
</dbReference>
<dbReference type="SMR" id="A9QY38"/>
<dbReference type="MEROPS" id="S08.006"/>
<dbReference type="GlyCosmos" id="A9QY38">
    <property type="glycosylation" value="8 sites, No reported glycans"/>
</dbReference>
<dbReference type="ProMEX" id="A9QY38"/>
<dbReference type="OMA" id="WNSSEPV"/>
<dbReference type="GO" id="GO:0048046">
    <property type="term" value="C:apoplast"/>
    <property type="evidence" value="ECO:0000250"/>
    <property type="project" value="UniProtKB"/>
</dbReference>
<dbReference type="GO" id="GO:0005615">
    <property type="term" value="C:extracellular space"/>
    <property type="evidence" value="ECO:0000250"/>
    <property type="project" value="UniProtKB"/>
</dbReference>
<dbReference type="GO" id="GO:0004252">
    <property type="term" value="F:serine-type endopeptidase activity"/>
    <property type="evidence" value="ECO:0007669"/>
    <property type="project" value="InterPro"/>
</dbReference>
<dbReference type="GO" id="GO:0036377">
    <property type="term" value="P:arbuscular mycorrhizal association"/>
    <property type="evidence" value="ECO:0000250"/>
    <property type="project" value="UniProtKB"/>
</dbReference>
<dbReference type="GO" id="GO:0006508">
    <property type="term" value="P:proteolysis"/>
    <property type="evidence" value="ECO:0007669"/>
    <property type="project" value="UniProtKB-KW"/>
</dbReference>
<dbReference type="GO" id="GO:0009609">
    <property type="term" value="P:response to symbiotic bacterium"/>
    <property type="evidence" value="ECO:0000270"/>
    <property type="project" value="UniProtKB"/>
</dbReference>
<dbReference type="GO" id="GO:0009610">
    <property type="term" value="P:response to symbiotic fungus"/>
    <property type="evidence" value="ECO:0000270"/>
    <property type="project" value="UniProtKB"/>
</dbReference>
<dbReference type="CDD" id="cd02120">
    <property type="entry name" value="PA_subtilisin_like"/>
    <property type="match status" value="1"/>
</dbReference>
<dbReference type="CDD" id="cd04852">
    <property type="entry name" value="Peptidases_S8_3"/>
    <property type="match status" value="1"/>
</dbReference>
<dbReference type="FunFam" id="3.40.50.200:FF:000006">
    <property type="entry name" value="Subtilisin-like protease SBT1.5"/>
    <property type="match status" value="1"/>
</dbReference>
<dbReference type="FunFam" id="3.50.30.30:FF:000005">
    <property type="entry name" value="subtilisin-like protease SBT1.5"/>
    <property type="match status" value="1"/>
</dbReference>
<dbReference type="Gene3D" id="2.60.40.2310">
    <property type="match status" value="1"/>
</dbReference>
<dbReference type="Gene3D" id="3.50.30.30">
    <property type="match status" value="1"/>
</dbReference>
<dbReference type="Gene3D" id="3.30.70.80">
    <property type="entry name" value="Peptidase S8 propeptide/proteinase inhibitor I9"/>
    <property type="match status" value="1"/>
</dbReference>
<dbReference type="Gene3D" id="3.40.50.200">
    <property type="entry name" value="Peptidase S8/S53 domain"/>
    <property type="match status" value="1"/>
</dbReference>
<dbReference type="InterPro" id="IPR003137">
    <property type="entry name" value="PA_domain"/>
</dbReference>
<dbReference type="InterPro" id="IPR000209">
    <property type="entry name" value="Peptidase_S8/S53_dom"/>
</dbReference>
<dbReference type="InterPro" id="IPR036852">
    <property type="entry name" value="Peptidase_S8/S53_dom_sf"/>
</dbReference>
<dbReference type="InterPro" id="IPR023827">
    <property type="entry name" value="Peptidase_S8_Asp-AS"/>
</dbReference>
<dbReference type="InterPro" id="IPR015500">
    <property type="entry name" value="Peptidase_S8_subtilisin-rel"/>
</dbReference>
<dbReference type="InterPro" id="IPR034197">
    <property type="entry name" value="Peptidases_S8_3"/>
</dbReference>
<dbReference type="InterPro" id="IPR010259">
    <property type="entry name" value="S8pro/Inhibitor_I9"/>
</dbReference>
<dbReference type="InterPro" id="IPR037045">
    <property type="entry name" value="S8pro/Inhibitor_I9_sf"/>
</dbReference>
<dbReference type="InterPro" id="IPR045051">
    <property type="entry name" value="SBT"/>
</dbReference>
<dbReference type="InterPro" id="IPR041469">
    <property type="entry name" value="Subtilisin-like_FN3"/>
</dbReference>
<dbReference type="PANTHER" id="PTHR10795">
    <property type="entry name" value="PROPROTEIN CONVERTASE SUBTILISIN/KEXIN"/>
    <property type="match status" value="1"/>
</dbReference>
<dbReference type="Pfam" id="PF17766">
    <property type="entry name" value="fn3_6"/>
    <property type="match status" value="1"/>
</dbReference>
<dbReference type="Pfam" id="PF05922">
    <property type="entry name" value="Inhibitor_I9"/>
    <property type="match status" value="1"/>
</dbReference>
<dbReference type="Pfam" id="PF02225">
    <property type="entry name" value="PA"/>
    <property type="match status" value="1"/>
</dbReference>
<dbReference type="Pfam" id="PF00082">
    <property type="entry name" value="Peptidase_S8"/>
    <property type="match status" value="1"/>
</dbReference>
<dbReference type="PRINTS" id="PR00723">
    <property type="entry name" value="SUBTILISIN"/>
</dbReference>
<dbReference type="SUPFAM" id="SSF52743">
    <property type="entry name" value="Subtilisin-like"/>
    <property type="match status" value="1"/>
</dbReference>
<dbReference type="PROSITE" id="PS51892">
    <property type="entry name" value="SUBTILASE"/>
    <property type="match status" value="1"/>
</dbReference>
<dbReference type="PROSITE" id="PS00136">
    <property type="entry name" value="SUBTILASE_ASP"/>
    <property type="match status" value="1"/>
</dbReference>
<keyword id="KW-0052">Apoplast</keyword>
<keyword id="KW-0325">Glycoprotein</keyword>
<keyword id="KW-0378">Hydrolase</keyword>
<keyword id="KW-0645">Protease</keyword>
<keyword id="KW-0964">Secreted</keyword>
<keyword id="KW-0720">Serine protease</keyword>
<keyword id="KW-0732">Signal</keyword>
<evidence type="ECO:0000250" key="1">
    <source>
        <dbReference type="UniProtKB" id="A9QY40"/>
    </source>
</evidence>
<evidence type="ECO:0000255" key="2"/>
<evidence type="ECO:0000255" key="3">
    <source>
        <dbReference type="PROSITE-ProRule" id="PRU00498"/>
    </source>
</evidence>
<evidence type="ECO:0000255" key="4">
    <source>
        <dbReference type="PROSITE-ProRule" id="PRU01240"/>
    </source>
</evidence>
<evidence type="ECO:0000255" key="5">
    <source>
        <dbReference type="PROSITE-ProRule" id="PRU10080"/>
    </source>
</evidence>
<evidence type="ECO:0000269" key="6">
    <source>
    </source>
</evidence>
<evidence type="ECO:0000303" key="7">
    <source>
    </source>
</evidence>
<protein>
    <recommendedName>
        <fullName evidence="7">Subtilisin-like protease 4</fullName>
        <shortName evidence="7">SbtM4</shortName>
        <shortName evidence="7">Subtilase 4</shortName>
        <ecNumber evidence="5">3.4.21.-</ecNumber>
    </recommendedName>
</protein>
<gene>
    <name evidence="7" type="primary">SBTM4</name>
</gene>
<name>SBT4_LOTJA</name>
<organism>
    <name type="scientific">Lotus japonicus</name>
    <name type="common">Lotus corniculatus var. japonicus</name>
    <dbReference type="NCBI Taxonomy" id="34305"/>
    <lineage>
        <taxon>Eukaryota</taxon>
        <taxon>Viridiplantae</taxon>
        <taxon>Streptophyta</taxon>
        <taxon>Embryophyta</taxon>
        <taxon>Tracheophyta</taxon>
        <taxon>Spermatophyta</taxon>
        <taxon>Magnoliopsida</taxon>
        <taxon>eudicotyledons</taxon>
        <taxon>Gunneridae</taxon>
        <taxon>Pentapetalae</taxon>
        <taxon>rosids</taxon>
        <taxon>fabids</taxon>
        <taxon>Fabales</taxon>
        <taxon>Fabaceae</taxon>
        <taxon>Papilionoideae</taxon>
        <taxon>50 kb inversion clade</taxon>
        <taxon>NPAAA clade</taxon>
        <taxon>Hologalegina</taxon>
        <taxon>robinioid clade</taxon>
        <taxon>Loteae</taxon>
        <taxon>Lotus</taxon>
    </lineage>
</organism>
<proteinExistence type="evidence at transcript level"/>